<proteinExistence type="evidence at protein level"/>
<accession>C0HJV0</accession>
<keyword id="KW-0027">Amidation</keyword>
<keyword id="KW-0903">Direct protein sequencing</keyword>
<keyword id="KW-1015">Disulfide bond</keyword>
<feature type="peptide" id="PRO_0000434016" description="Calcitonin-like peptide 1" evidence="1">
    <location>
        <begin position="1"/>
        <end position="34"/>
    </location>
</feature>
<feature type="modified residue" description="Proline amide" evidence="1">
    <location>
        <position position="34"/>
    </location>
</feature>
<feature type="disulfide bond" evidence="1">
    <location>
        <begin position="2"/>
        <end position="7"/>
    </location>
</feature>
<feature type="unsure residue" description="L or I" evidence="1">
    <location>
        <position position="4"/>
    </location>
</feature>
<feature type="unsure residue" description="L or I" evidence="1">
    <location>
        <position position="12"/>
    </location>
</feature>
<feature type="unsure residue" description="L or I" evidence="1">
    <location>
        <position position="16"/>
    </location>
</feature>
<evidence type="ECO:0000269" key="1">
    <source ref="1"/>
</evidence>
<evidence type="ECO:0000303" key="2">
    <source ref="1"/>
</evidence>
<evidence type="ECO:0000305" key="3"/>
<reference evidence="3" key="1">
    <citation type="journal article" date="2015" name="EuPA Open Proteomics">
        <title>De novo sequencing of two novel peptides homologous to calcitonin-like peptides, from skin secretion of the Chinese Frog, Odorrana schmackeri.</title>
        <authorList>
            <person name="Evaristo G.P.C."/>
            <person name="Pinkse M.W.H."/>
            <person name="Chen T."/>
            <person name="Wang L."/>
            <person name="Mohammed S."/>
            <person name="Heck A.J.R."/>
            <person name="Mathes I."/>
            <person name="Lottspeich F."/>
            <person name="Shaw C."/>
            <person name="Albar J.P."/>
            <person name="Verhaert P.D.E.M."/>
        </authorList>
    </citation>
    <scope>PROTEIN SEQUENCE</scope>
    <scope>DISULFIDE BOND</scope>
    <scope>AMIDATION AT PRO-34</scope>
    <scope>IDENTIFICATION BY MASS SPECTROMETRY</scope>
    <source>
        <tissue evidence="2">Skin secretion</tissue>
    </source>
</reference>
<organism>
    <name type="scientific">Odorrana schmackeri</name>
    <name type="common">Schmacker's frog</name>
    <name type="synonym">Rana schmackeri</name>
    <dbReference type="NCBI Taxonomy" id="110116"/>
    <lineage>
        <taxon>Eukaryota</taxon>
        <taxon>Metazoa</taxon>
        <taxon>Chordata</taxon>
        <taxon>Craniata</taxon>
        <taxon>Vertebrata</taxon>
        <taxon>Euteleostomi</taxon>
        <taxon>Amphibia</taxon>
        <taxon>Batrachia</taxon>
        <taxon>Anura</taxon>
        <taxon>Neobatrachia</taxon>
        <taxon>Ranoidea</taxon>
        <taxon>Ranidae</taxon>
        <taxon>Odorrana</taxon>
    </lineage>
</organism>
<dbReference type="SMR" id="C0HJV0"/>
<sequence>GCDLSTCATHNLVNELNKFDKSKPSSGGVGPESP</sequence>
<name>CTLP1_ODOSH</name>
<protein>
    <recommendedName>
        <fullName evidence="2">Calcitonin-like peptide 1</fullName>
        <shortName evidence="2">OsCTLP-1</shortName>
    </recommendedName>
</protein>
<comment type="mass spectrometry"/>